<keyword id="KW-0066">ATP synthesis</keyword>
<keyword id="KW-0067">ATP-binding</keyword>
<keyword id="KW-0997">Cell inner membrane</keyword>
<keyword id="KW-1003">Cell membrane</keyword>
<keyword id="KW-0139">CF(1)</keyword>
<keyword id="KW-0375">Hydrogen ion transport</keyword>
<keyword id="KW-0406">Ion transport</keyword>
<keyword id="KW-0472">Membrane</keyword>
<keyword id="KW-0547">Nucleotide-binding</keyword>
<keyword id="KW-1185">Reference proteome</keyword>
<keyword id="KW-1278">Translocase</keyword>
<keyword id="KW-0813">Transport</keyword>
<evidence type="ECO:0000255" key="1">
    <source>
        <dbReference type="HAMAP-Rule" id="MF_01347"/>
    </source>
</evidence>
<name>ATPB_CAMLR</name>
<protein>
    <recommendedName>
        <fullName evidence="1">ATP synthase subunit beta</fullName>
        <ecNumber evidence="1">7.1.2.2</ecNumber>
    </recommendedName>
    <alternativeName>
        <fullName evidence="1">ATP synthase F1 sector subunit beta</fullName>
    </alternativeName>
    <alternativeName>
        <fullName evidence="1">F-ATPase subunit beta</fullName>
    </alternativeName>
</protein>
<feature type="chain" id="PRO_1000166577" description="ATP synthase subunit beta">
    <location>
        <begin position="1"/>
        <end position="484"/>
    </location>
</feature>
<feature type="binding site" evidence="1">
    <location>
        <begin position="152"/>
        <end position="159"/>
    </location>
    <ligand>
        <name>ATP</name>
        <dbReference type="ChEBI" id="CHEBI:30616"/>
    </ligand>
</feature>
<proteinExistence type="inferred from homology"/>
<gene>
    <name evidence="1" type="primary">atpD</name>
    <name type="ordered locus">Cla_0195</name>
</gene>
<accession>B9KES3</accession>
<sequence length="484" mass="53095">MQGFISQVLGPVVDVEFKDYLPQINEAIVVNYELEGKECKLVLEVAAHLGDNKVRTIAMDMTDGLVRGLTAVATGNPISVPVGEKVLGRIFNVTGDLIDEGEEINFDKHWSIHRDPPPFEEQSTKSEIFETGIKVVDLLAPYAKGGKVGLFGGAGVGKTVIIMELIHNVAFKHSGYSVFAGVGERTREGNDLYNEMKESNVLDKVALCYGQMNEPPGARNRIALTGLTMAEYFRDEMGLDVLMFIDNIFRFSQSGSEMSALLGRIPSAVGYQPTLASEMGKFQERITSTKKGSITSVQAVYVPADDLTDPAPATVFAHLDATTVLNRSIAEKGIYPAVDPLDSTSRMLDPQIIGEEHYKVARGVQSVLQKYKDLQDIIAILGMDELSEEDKLIVERARKIEKFLSQPFFVAEVFTGSPGKYISLEDTIAGFKGILEGKYDDLPENAFYMVGNIDEAIAKAETLKEVSRKDVCLDNCKVDKAKKG</sequence>
<reference key="1">
    <citation type="journal article" date="2008" name="Foodborne Pathog. Dis.">
        <title>The complete genome sequence and analysis of the human pathogen Campylobacter lari.</title>
        <authorList>
            <person name="Miller W.G."/>
            <person name="Wang G."/>
            <person name="Binnewies T.T."/>
            <person name="Parker C.T."/>
        </authorList>
    </citation>
    <scope>NUCLEOTIDE SEQUENCE [LARGE SCALE GENOMIC DNA]</scope>
    <source>
        <strain>RM2100 / D67 / ATCC BAA-1060</strain>
    </source>
</reference>
<dbReference type="EC" id="7.1.2.2" evidence="1"/>
<dbReference type="EMBL" id="CP000932">
    <property type="protein sequence ID" value="ACM63558.1"/>
    <property type="molecule type" value="Genomic_DNA"/>
</dbReference>
<dbReference type="RefSeq" id="WP_012660942.1">
    <property type="nucleotide sequence ID" value="NC_012039.1"/>
</dbReference>
<dbReference type="SMR" id="B9KES3"/>
<dbReference type="STRING" id="306263.Cla_0195"/>
<dbReference type="KEGG" id="cla:CLA_0195"/>
<dbReference type="PATRIC" id="fig|306263.5.peg.194"/>
<dbReference type="eggNOG" id="COG0055">
    <property type="taxonomic scope" value="Bacteria"/>
</dbReference>
<dbReference type="HOGENOM" id="CLU_022398_0_2_7"/>
<dbReference type="Proteomes" id="UP000007727">
    <property type="component" value="Chromosome"/>
</dbReference>
<dbReference type="GO" id="GO:0005886">
    <property type="term" value="C:plasma membrane"/>
    <property type="evidence" value="ECO:0007669"/>
    <property type="project" value="UniProtKB-SubCell"/>
</dbReference>
<dbReference type="GO" id="GO:0045259">
    <property type="term" value="C:proton-transporting ATP synthase complex"/>
    <property type="evidence" value="ECO:0007669"/>
    <property type="project" value="UniProtKB-KW"/>
</dbReference>
<dbReference type="GO" id="GO:0005524">
    <property type="term" value="F:ATP binding"/>
    <property type="evidence" value="ECO:0007669"/>
    <property type="project" value="UniProtKB-UniRule"/>
</dbReference>
<dbReference type="GO" id="GO:0016887">
    <property type="term" value="F:ATP hydrolysis activity"/>
    <property type="evidence" value="ECO:0007669"/>
    <property type="project" value="InterPro"/>
</dbReference>
<dbReference type="GO" id="GO:0046933">
    <property type="term" value="F:proton-transporting ATP synthase activity, rotational mechanism"/>
    <property type="evidence" value="ECO:0007669"/>
    <property type="project" value="UniProtKB-UniRule"/>
</dbReference>
<dbReference type="CDD" id="cd18110">
    <property type="entry name" value="ATP-synt_F1_beta_C"/>
    <property type="match status" value="1"/>
</dbReference>
<dbReference type="CDD" id="cd18115">
    <property type="entry name" value="ATP-synt_F1_beta_N"/>
    <property type="match status" value="1"/>
</dbReference>
<dbReference type="CDD" id="cd01133">
    <property type="entry name" value="F1-ATPase_beta_CD"/>
    <property type="match status" value="1"/>
</dbReference>
<dbReference type="FunFam" id="1.10.1140.10:FF:000001">
    <property type="entry name" value="ATP synthase subunit beta"/>
    <property type="match status" value="1"/>
</dbReference>
<dbReference type="FunFam" id="3.40.50.300:FF:000004">
    <property type="entry name" value="ATP synthase subunit beta"/>
    <property type="match status" value="1"/>
</dbReference>
<dbReference type="Gene3D" id="2.40.10.170">
    <property type="match status" value="1"/>
</dbReference>
<dbReference type="Gene3D" id="1.10.1140.10">
    <property type="entry name" value="Bovine Mitochondrial F1-atpase, Atp Synthase Beta Chain, Chain D, domain 3"/>
    <property type="match status" value="1"/>
</dbReference>
<dbReference type="Gene3D" id="3.40.50.300">
    <property type="entry name" value="P-loop containing nucleotide triphosphate hydrolases"/>
    <property type="match status" value="1"/>
</dbReference>
<dbReference type="HAMAP" id="MF_01347">
    <property type="entry name" value="ATP_synth_beta_bact"/>
    <property type="match status" value="1"/>
</dbReference>
<dbReference type="InterPro" id="IPR003593">
    <property type="entry name" value="AAA+_ATPase"/>
</dbReference>
<dbReference type="InterPro" id="IPR055190">
    <property type="entry name" value="ATP-synt_VA_C"/>
</dbReference>
<dbReference type="InterPro" id="IPR005722">
    <property type="entry name" value="ATP_synth_F1_bsu"/>
</dbReference>
<dbReference type="InterPro" id="IPR020003">
    <property type="entry name" value="ATPase_a/bsu_AS"/>
</dbReference>
<dbReference type="InterPro" id="IPR050053">
    <property type="entry name" value="ATPase_alpha/beta_chains"/>
</dbReference>
<dbReference type="InterPro" id="IPR004100">
    <property type="entry name" value="ATPase_F1/V1/A1_a/bsu_N"/>
</dbReference>
<dbReference type="InterPro" id="IPR036121">
    <property type="entry name" value="ATPase_F1/V1/A1_a/bsu_N_sf"/>
</dbReference>
<dbReference type="InterPro" id="IPR000194">
    <property type="entry name" value="ATPase_F1/V1/A1_a/bsu_nucl-bd"/>
</dbReference>
<dbReference type="InterPro" id="IPR024034">
    <property type="entry name" value="ATPase_F1/V1_b/a_C"/>
</dbReference>
<dbReference type="InterPro" id="IPR027417">
    <property type="entry name" value="P-loop_NTPase"/>
</dbReference>
<dbReference type="NCBIfam" id="TIGR01039">
    <property type="entry name" value="atpD"/>
    <property type="match status" value="1"/>
</dbReference>
<dbReference type="PANTHER" id="PTHR15184">
    <property type="entry name" value="ATP SYNTHASE"/>
    <property type="match status" value="1"/>
</dbReference>
<dbReference type="PANTHER" id="PTHR15184:SF71">
    <property type="entry name" value="ATP SYNTHASE SUBUNIT BETA, MITOCHONDRIAL"/>
    <property type="match status" value="1"/>
</dbReference>
<dbReference type="Pfam" id="PF00006">
    <property type="entry name" value="ATP-synt_ab"/>
    <property type="match status" value="1"/>
</dbReference>
<dbReference type="Pfam" id="PF02874">
    <property type="entry name" value="ATP-synt_ab_N"/>
    <property type="match status" value="1"/>
</dbReference>
<dbReference type="Pfam" id="PF22919">
    <property type="entry name" value="ATP-synt_VA_C"/>
    <property type="match status" value="1"/>
</dbReference>
<dbReference type="SMART" id="SM00382">
    <property type="entry name" value="AAA"/>
    <property type="match status" value="1"/>
</dbReference>
<dbReference type="SUPFAM" id="SSF47917">
    <property type="entry name" value="C-terminal domain of alpha and beta subunits of F1 ATP synthase"/>
    <property type="match status" value="1"/>
</dbReference>
<dbReference type="SUPFAM" id="SSF50615">
    <property type="entry name" value="N-terminal domain of alpha and beta subunits of F1 ATP synthase"/>
    <property type="match status" value="1"/>
</dbReference>
<dbReference type="SUPFAM" id="SSF52540">
    <property type="entry name" value="P-loop containing nucleoside triphosphate hydrolases"/>
    <property type="match status" value="1"/>
</dbReference>
<dbReference type="PROSITE" id="PS00152">
    <property type="entry name" value="ATPASE_ALPHA_BETA"/>
    <property type="match status" value="1"/>
</dbReference>
<comment type="function">
    <text evidence="1">Produces ATP from ADP in the presence of a proton gradient across the membrane. The catalytic sites are hosted primarily by the beta subunits.</text>
</comment>
<comment type="catalytic activity">
    <reaction evidence="1">
        <text>ATP + H2O + 4 H(+)(in) = ADP + phosphate + 5 H(+)(out)</text>
        <dbReference type="Rhea" id="RHEA:57720"/>
        <dbReference type="ChEBI" id="CHEBI:15377"/>
        <dbReference type="ChEBI" id="CHEBI:15378"/>
        <dbReference type="ChEBI" id="CHEBI:30616"/>
        <dbReference type="ChEBI" id="CHEBI:43474"/>
        <dbReference type="ChEBI" id="CHEBI:456216"/>
        <dbReference type="EC" id="7.1.2.2"/>
    </reaction>
</comment>
<comment type="subunit">
    <text evidence="1">F-type ATPases have 2 components, CF(1) - the catalytic core - and CF(0) - the membrane proton channel. CF(1) has five subunits: alpha(3), beta(3), gamma(1), delta(1), epsilon(1). CF(0) has three main subunits: a(1), b(2) and c(9-12). The alpha and beta chains form an alternating ring which encloses part of the gamma chain. CF(1) is attached to CF(0) by a central stalk formed by the gamma and epsilon chains, while a peripheral stalk is formed by the delta and b chains.</text>
</comment>
<comment type="subcellular location">
    <subcellularLocation>
        <location evidence="1">Cell inner membrane</location>
        <topology evidence="1">Peripheral membrane protein</topology>
    </subcellularLocation>
</comment>
<comment type="similarity">
    <text evidence="1">Belongs to the ATPase alpha/beta chains family.</text>
</comment>
<organism>
    <name type="scientific">Campylobacter lari (strain RM2100 / D67 / ATCC BAA-1060)</name>
    <dbReference type="NCBI Taxonomy" id="306263"/>
    <lineage>
        <taxon>Bacteria</taxon>
        <taxon>Pseudomonadati</taxon>
        <taxon>Campylobacterota</taxon>
        <taxon>Epsilonproteobacteria</taxon>
        <taxon>Campylobacterales</taxon>
        <taxon>Campylobacteraceae</taxon>
        <taxon>Campylobacter</taxon>
    </lineage>
</organism>